<gene>
    <name evidence="1" type="primary">lepA</name>
    <name type="ordered locus">PMM0420</name>
</gene>
<accession>Q7V2Q1</accession>
<feature type="chain" id="PRO_0000176322" description="Elongation factor 4">
    <location>
        <begin position="1"/>
        <end position="602"/>
    </location>
</feature>
<feature type="domain" description="tr-type G">
    <location>
        <begin position="7"/>
        <end position="189"/>
    </location>
</feature>
<feature type="binding site" evidence="1">
    <location>
        <begin position="19"/>
        <end position="24"/>
    </location>
    <ligand>
        <name>GTP</name>
        <dbReference type="ChEBI" id="CHEBI:37565"/>
    </ligand>
</feature>
<feature type="binding site" evidence="1">
    <location>
        <begin position="136"/>
        <end position="139"/>
    </location>
    <ligand>
        <name>GTP</name>
        <dbReference type="ChEBI" id="CHEBI:37565"/>
    </ligand>
</feature>
<name>LEPA_PROMP</name>
<evidence type="ECO:0000255" key="1">
    <source>
        <dbReference type="HAMAP-Rule" id="MF_00071"/>
    </source>
</evidence>
<reference key="1">
    <citation type="journal article" date="2003" name="Nature">
        <title>Genome divergence in two Prochlorococcus ecotypes reflects oceanic niche differentiation.</title>
        <authorList>
            <person name="Rocap G."/>
            <person name="Larimer F.W."/>
            <person name="Lamerdin J.E."/>
            <person name="Malfatti S."/>
            <person name="Chain P."/>
            <person name="Ahlgren N.A."/>
            <person name="Arellano A."/>
            <person name="Coleman M."/>
            <person name="Hauser L."/>
            <person name="Hess W.R."/>
            <person name="Johnson Z.I."/>
            <person name="Land M.L."/>
            <person name="Lindell D."/>
            <person name="Post A.F."/>
            <person name="Regala W."/>
            <person name="Shah M."/>
            <person name="Shaw S.L."/>
            <person name="Steglich C."/>
            <person name="Sullivan M.B."/>
            <person name="Ting C.S."/>
            <person name="Tolonen A."/>
            <person name="Webb E.A."/>
            <person name="Zinser E.R."/>
            <person name="Chisholm S.W."/>
        </authorList>
    </citation>
    <scope>NUCLEOTIDE SEQUENCE [LARGE SCALE GENOMIC DNA]</scope>
    <source>
        <strain>CCMP1986 / NIES-2087 / MED4</strain>
    </source>
</reference>
<dbReference type="EC" id="3.6.5.n1" evidence="1"/>
<dbReference type="EMBL" id="BX548174">
    <property type="protein sequence ID" value="CAE18879.1"/>
    <property type="molecule type" value="Genomic_DNA"/>
</dbReference>
<dbReference type="RefSeq" id="WP_011132056.1">
    <property type="nucleotide sequence ID" value="NC_005072.1"/>
</dbReference>
<dbReference type="SMR" id="Q7V2Q1"/>
<dbReference type="STRING" id="59919.PMM0420"/>
<dbReference type="KEGG" id="pmm:PMM0420"/>
<dbReference type="eggNOG" id="COG0481">
    <property type="taxonomic scope" value="Bacteria"/>
</dbReference>
<dbReference type="HOGENOM" id="CLU_009995_3_3_3"/>
<dbReference type="OrthoDB" id="580826at2"/>
<dbReference type="Proteomes" id="UP000001026">
    <property type="component" value="Chromosome"/>
</dbReference>
<dbReference type="GO" id="GO:0005886">
    <property type="term" value="C:plasma membrane"/>
    <property type="evidence" value="ECO:0007669"/>
    <property type="project" value="UniProtKB-SubCell"/>
</dbReference>
<dbReference type="GO" id="GO:0005525">
    <property type="term" value="F:GTP binding"/>
    <property type="evidence" value="ECO:0007669"/>
    <property type="project" value="UniProtKB-KW"/>
</dbReference>
<dbReference type="GO" id="GO:0003924">
    <property type="term" value="F:GTPase activity"/>
    <property type="evidence" value="ECO:0007669"/>
    <property type="project" value="InterPro"/>
</dbReference>
<dbReference type="GO" id="GO:0043022">
    <property type="term" value="F:ribosome binding"/>
    <property type="evidence" value="ECO:0007669"/>
    <property type="project" value="TreeGrafter"/>
</dbReference>
<dbReference type="GO" id="GO:0045727">
    <property type="term" value="P:positive regulation of translation"/>
    <property type="evidence" value="ECO:0007669"/>
    <property type="project" value="TreeGrafter"/>
</dbReference>
<dbReference type="GO" id="GO:0006412">
    <property type="term" value="P:translation"/>
    <property type="evidence" value="ECO:0007669"/>
    <property type="project" value="UniProtKB-KW"/>
</dbReference>
<dbReference type="CDD" id="cd03699">
    <property type="entry name" value="EF4_II"/>
    <property type="match status" value="1"/>
</dbReference>
<dbReference type="CDD" id="cd16260">
    <property type="entry name" value="EF4_III"/>
    <property type="match status" value="1"/>
</dbReference>
<dbReference type="CDD" id="cd01890">
    <property type="entry name" value="LepA"/>
    <property type="match status" value="1"/>
</dbReference>
<dbReference type="CDD" id="cd03709">
    <property type="entry name" value="lepA_C"/>
    <property type="match status" value="1"/>
</dbReference>
<dbReference type="FunFam" id="3.40.50.300:FF:000078">
    <property type="entry name" value="Elongation factor 4"/>
    <property type="match status" value="1"/>
</dbReference>
<dbReference type="FunFam" id="2.40.30.10:FF:000015">
    <property type="entry name" value="Translation factor GUF1, mitochondrial"/>
    <property type="match status" value="1"/>
</dbReference>
<dbReference type="FunFam" id="3.30.70.240:FF:000007">
    <property type="entry name" value="Translation factor GUF1, mitochondrial"/>
    <property type="match status" value="1"/>
</dbReference>
<dbReference type="FunFam" id="3.30.70.2570:FF:000001">
    <property type="entry name" value="Translation factor GUF1, mitochondrial"/>
    <property type="match status" value="1"/>
</dbReference>
<dbReference type="FunFam" id="3.30.70.870:FF:000004">
    <property type="entry name" value="Translation factor GUF1, mitochondrial"/>
    <property type="match status" value="1"/>
</dbReference>
<dbReference type="Gene3D" id="3.30.70.240">
    <property type="match status" value="1"/>
</dbReference>
<dbReference type="Gene3D" id="3.30.70.2570">
    <property type="entry name" value="Elongation factor 4, C-terminal domain"/>
    <property type="match status" value="1"/>
</dbReference>
<dbReference type="Gene3D" id="3.30.70.870">
    <property type="entry name" value="Elongation Factor G (Translational Gtpase), domain 3"/>
    <property type="match status" value="1"/>
</dbReference>
<dbReference type="Gene3D" id="3.40.50.300">
    <property type="entry name" value="P-loop containing nucleotide triphosphate hydrolases"/>
    <property type="match status" value="1"/>
</dbReference>
<dbReference type="Gene3D" id="2.40.30.10">
    <property type="entry name" value="Translation factors"/>
    <property type="match status" value="1"/>
</dbReference>
<dbReference type="HAMAP" id="MF_03138">
    <property type="entry name" value="GUFP"/>
    <property type="match status" value="1"/>
</dbReference>
<dbReference type="HAMAP" id="MF_00071">
    <property type="entry name" value="LepA"/>
    <property type="match status" value="1"/>
</dbReference>
<dbReference type="InterPro" id="IPR006297">
    <property type="entry name" value="EF-4"/>
</dbReference>
<dbReference type="InterPro" id="IPR035647">
    <property type="entry name" value="EFG_III/V"/>
</dbReference>
<dbReference type="InterPro" id="IPR000640">
    <property type="entry name" value="EFG_V-like"/>
</dbReference>
<dbReference type="InterPro" id="IPR004161">
    <property type="entry name" value="EFTu-like_2"/>
</dbReference>
<dbReference type="InterPro" id="IPR031157">
    <property type="entry name" value="G_TR_CS"/>
</dbReference>
<dbReference type="InterPro" id="IPR027518">
    <property type="entry name" value="GUFP"/>
</dbReference>
<dbReference type="InterPro" id="IPR038363">
    <property type="entry name" value="LepA_C_sf"/>
</dbReference>
<dbReference type="InterPro" id="IPR013842">
    <property type="entry name" value="LepA_CTD"/>
</dbReference>
<dbReference type="InterPro" id="IPR035654">
    <property type="entry name" value="LepA_IV"/>
</dbReference>
<dbReference type="InterPro" id="IPR027417">
    <property type="entry name" value="P-loop_NTPase"/>
</dbReference>
<dbReference type="InterPro" id="IPR005225">
    <property type="entry name" value="Small_GTP-bd"/>
</dbReference>
<dbReference type="InterPro" id="IPR000795">
    <property type="entry name" value="T_Tr_GTP-bd_dom"/>
</dbReference>
<dbReference type="InterPro" id="IPR009000">
    <property type="entry name" value="Transl_B-barrel_sf"/>
</dbReference>
<dbReference type="NCBIfam" id="TIGR01393">
    <property type="entry name" value="lepA"/>
    <property type="match status" value="1"/>
</dbReference>
<dbReference type="NCBIfam" id="TIGR00231">
    <property type="entry name" value="small_GTP"/>
    <property type="match status" value="1"/>
</dbReference>
<dbReference type="PANTHER" id="PTHR43512:SF4">
    <property type="entry name" value="TRANSLATION FACTOR GUF1 HOMOLOG, CHLOROPLASTIC"/>
    <property type="match status" value="1"/>
</dbReference>
<dbReference type="PANTHER" id="PTHR43512">
    <property type="entry name" value="TRANSLATION FACTOR GUF1-RELATED"/>
    <property type="match status" value="1"/>
</dbReference>
<dbReference type="Pfam" id="PF00679">
    <property type="entry name" value="EFG_C"/>
    <property type="match status" value="1"/>
</dbReference>
<dbReference type="Pfam" id="PF00009">
    <property type="entry name" value="GTP_EFTU"/>
    <property type="match status" value="1"/>
</dbReference>
<dbReference type="Pfam" id="PF03144">
    <property type="entry name" value="GTP_EFTU_D2"/>
    <property type="match status" value="1"/>
</dbReference>
<dbReference type="Pfam" id="PF06421">
    <property type="entry name" value="LepA_C"/>
    <property type="match status" value="1"/>
</dbReference>
<dbReference type="PRINTS" id="PR00315">
    <property type="entry name" value="ELONGATNFCT"/>
</dbReference>
<dbReference type="SMART" id="SM00838">
    <property type="entry name" value="EFG_C"/>
    <property type="match status" value="1"/>
</dbReference>
<dbReference type="SUPFAM" id="SSF54980">
    <property type="entry name" value="EF-G C-terminal domain-like"/>
    <property type="match status" value="2"/>
</dbReference>
<dbReference type="SUPFAM" id="SSF52540">
    <property type="entry name" value="P-loop containing nucleoside triphosphate hydrolases"/>
    <property type="match status" value="1"/>
</dbReference>
<dbReference type="SUPFAM" id="SSF50447">
    <property type="entry name" value="Translation proteins"/>
    <property type="match status" value="1"/>
</dbReference>
<dbReference type="PROSITE" id="PS00301">
    <property type="entry name" value="G_TR_1"/>
    <property type="match status" value="1"/>
</dbReference>
<dbReference type="PROSITE" id="PS51722">
    <property type="entry name" value="G_TR_2"/>
    <property type="match status" value="1"/>
</dbReference>
<sequence length="602" mass="67458">MTDISVSKIRNFCIIAHIDHGKSTLADRLLQDTGTVKQRDMQDQFLDSMDLERERGITIKLQAARMKYKAKDSQEYILNLIDTPGHVDFSYEVSRSLQACEGALLVVDASQGVEAQTLANVYLALENNLEIIPVLNKVDLPGADAEKIKQEIEEIIGLDTSNAINCSAKTGEGIEDILEAVVSRIPHPQNEVKSLTKALIFDSYYDPYRGVIVYFRVIAGSINKKDKILLMASKKNYELDEIGIMAPDEKQVNELHAGEVGYLAASIKSVADARVGDTITLFNSPAKDPLPGYKTANPMVFCGLFPTDADQYPDLRESLEKLQLSDAALKYEPETSSAMGFGFRCGFLGLLHMEIVQERLEREYDLDLIVTAPSVIYKVNLNDQEDILIDNPSTIPDPQSRESIEEPYVKMEIYSPNEFNGTLMGLCQERRGVFIDMKYITTDRVTLIYEIPLAEVVTDFFDQMKSRTQGYASMEYHLIGYRKNDLVRLDVLINSERADPLTSIVHKDKAYGIGRGLVEKLKELIPKQQFKIPIQASIGSRIIASESISALRKDVLSKCYGGDISRKKKLLKKQAKGKKRMKAMGKVDVPQEAFMAVLKLNQ</sequence>
<comment type="function">
    <text evidence="1">Required for accurate and efficient protein synthesis under certain stress conditions. May act as a fidelity factor of the translation reaction, by catalyzing a one-codon backward translocation of tRNAs on improperly translocated ribosomes. Back-translocation proceeds from a post-translocation (POST) complex to a pre-translocation (PRE) complex, thus giving elongation factor G a second chance to translocate the tRNAs correctly. Binds to ribosomes in a GTP-dependent manner.</text>
</comment>
<comment type="catalytic activity">
    <reaction evidence="1">
        <text>GTP + H2O = GDP + phosphate + H(+)</text>
        <dbReference type="Rhea" id="RHEA:19669"/>
        <dbReference type="ChEBI" id="CHEBI:15377"/>
        <dbReference type="ChEBI" id="CHEBI:15378"/>
        <dbReference type="ChEBI" id="CHEBI:37565"/>
        <dbReference type="ChEBI" id="CHEBI:43474"/>
        <dbReference type="ChEBI" id="CHEBI:58189"/>
        <dbReference type="EC" id="3.6.5.n1"/>
    </reaction>
</comment>
<comment type="subcellular location">
    <subcellularLocation>
        <location evidence="1">Cell inner membrane</location>
        <topology evidence="1">Peripheral membrane protein</topology>
        <orientation evidence="1">Cytoplasmic side</orientation>
    </subcellularLocation>
</comment>
<comment type="similarity">
    <text evidence="1">Belongs to the TRAFAC class translation factor GTPase superfamily. Classic translation factor GTPase family. LepA subfamily.</text>
</comment>
<proteinExistence type="inferred from homology"/>
<protein>
    <recommendedName>
        <fullName evidence="1">Elongation factor 4</fullName>
        <shortName evidence="1">EF-4</shortName>
        <ecNumber evidence="1">3.6.5.n1</ecNumber>
    </recommendedName>
    <alternativeName>
        <fullName evidence="1">Ribosomal back-translocase LepA</fullName>
    </alternativeName>
</protein>
<organism>
    <name type="scientific">Prochlorococcus marinus subsp. pastoris (strain CCMP1986 / NIES-2087 / MED4)</name>
    <dbReference type="NCBI Taxonomy" id="59919"/>
    <lineage>
        <taxon>Bacteria</taxon>
        <taxon>Bacillati</taxon>
        <taxon>Cyanobacteriota</taxon>
        <taxon>Cyanophyceae</taxon>
        <taxon>Synechococcales</taxon>
        <taxon>Prochlorococcaceae</taxon>
        <taxon>Prochlorococcus</taxon>
    </lineage>
</organism>
<keyword id="KW-0997">Cell inner membrane</keyword>
<keyword id="KW-1003">Cell membrane</keyword>
<keyword id="KW-0342">GTP-binding</keyword>
<keyword id="KW-0378">Hydrolase</keyword>
<keyword id="KW-0472">Membrane</keyword>
<keyword id="KW-0547">Nucleotide-binding</keyword>
<keyword id="KW-0648">Protein biosynthesis</keyword>